<name>NEP_DROME</name>
<comment type="function">
    <text evidence="8 9">Metalloendoprotease which functions in fertility and memory formation (PubMed:24395329, PubMed:27629706). Required in the dorsal paired medial neurons and alpha/beta mushroom body neurons for the proper formation of long-term and middle-term memories (PubMed:27629706). Required in males to maximise egg-laying in female mates and is also required in females for their fertility (PubMed:24395329).</text>
</comment>
<comment type="catalytic activity">
    <reaction evidence="2">
        <text>Preferential cleavage of polypeptides between hydrophobic residues, particularly with Phe or Tyr at P1'.</text>
        <dbReference type="EC" id="3.4.24.11"/>
    </reaction>
</comment>
<comment type="cofactor">
    <cofactor evidence="1">
        <name>Zn(2+)</name>
        <dbReference type="ChEBI" id="CHEBI:29105"/>
    </cofactor>
    <text evidence="1">Binds 1 zinc ion per subunit.</text>
</comment>
<comment type="subcellular location">
    <subcellularLocation>
        <location evidence="11">Cell membrane</location>
        <topology evidence="11">Single-pass type II membrane protein</topology>
    </subcellularLocation>
</comment>
<comment type="tissue specificity">
    <text evidence="8">Expressed in the testicular tube, near and in the seminal vesicles. In adults and third-instar larvae, expressed in the midgut and in the mushroom bodies of the brain and neurons in the pars intercerebralis. Also expressed in neurons of the ventral ganglion and imaginal disks (wing and leg) of third-instar larvae. In stage 17 embryos, expressed in the peripheral nervous system, pharynx and midgut.</text>
</comment>
<comment type="disruption phenotype">
    <text evidence="8 9">RNAi-mediated knockdown females lay fewer eggs and display a reduced hatch rate when mated to wild-type males, and wild-type females lay fewer eggs when mated to RNAi-mediated knockdown males (PubMed:24395329). RNAi-mediated knockdown in the dorsal paired medial neurons impairs middle-term (MTM) and long-term memory (LTM), but has no effect on normal aversion learning and anesthesia-resistant memory (ARM) (PubMed:27629706). RNAi-mediated knockdown in alpha/beta mushroom body neurons impairs MTM and LTM (PubMed:27629706). RNAi-mediated knockdown in all mushroom body neurons has no effect on learning and ARM (PubMed:27629706).</text>
</comment>
<comment type="similarity">
    <text evidence="5 11">Belongs to the peptidase M13 family.</text>
</comment>
<keyword id="KW-1003">Cell membrane</keyword>
<keyword id="KW-1015">Disulfide bond</keyword>
<keyword id="KW-0325">Glycoprotein</keyword>
<keyword id="KW-0378">Hydrolase</keyword>
<keyword id="KW-0472">Membrane</keyword>
<keyword id="KW-0479">Metal-binding</keyword>
<keyword id="KW-0482">Metalloprotease</keyword>
<keyword id="KW-0645">Protease</keyword>
<keyword id="KW-1185">Reference proteome</keyword>
<keyword id="KW-0735">Signal-anchor</keyword>
<keyword id="KW-0812">Transmembrane</keyword>
<keyword id="KW-1133">Transmembrane helix</keyword>
<keyword id="KW-0862">Zinc</keyword>
<feature type="chain" id="PRO_0000441989" description="Neprilysin-1">
    <location>
        <begin position="1"/>
        <end position="849"/>
    </location>
</feature>
<feature type="topological domain" description="Cytoplasmic" evidence="11">
    <location>
        <begin position="1"/>
        <end position="113"/>
    </location>
</feature>
<feature type="transmembrane region" description="Helical; Signal-anchor for type II membrane protein" evidence="3">
    <location>
        <begin position="114"/>
        <end position="134"/>
    </location>
</feature>
<feature type="topological domain" description="Extracellular" evidence="11">
    <location>
        <begin position="135"/>
        <end position="849"/>
    </location>
</feature>
<feature type="domain" description="Peptidase M13" evidence="5">
    <location>
        <begin position="172"/>
        <end position="849"/>
    </location>
</feature>
<feature type="region of interest" description="Disordered" evidence="7">
    <location>
        <begin position="41"/>
        <end position="63"/>
    </location>
</feature>
<feature type="region of interest" description="Disordered" evidence="7">
    <location>
        <begin position="146"/>
        <end position="167"/>
    </location>
</feature>
<feature type="compositionally biased region" description="Low complexity" evidence="7">
    <location>
        <begin position="41"/>
        <end position="61"/>
    </location>
</feature>
<feature type="compositionally biased region" description="Basic and acidic residues" evidence="7">
    <location>
        <begin position="146"/>
        <end position="155"/>
    </location>
</feature>
<feature type="active site" evidence="5 6">
    <location>
        <position position="685"/>
    </location>
</feature>
<feature type="active site" description="Proton donor" evidence="5">
    <location>
        <position position="750"/>
    </location>
</feature>
<feature type="binding site" evidence="5 6">
    <location>
        <position position="684"/>
    </location>
    <ligand>
        <name>Zn(2+)</name>
        <dbReference type="ChEBI" id="CHEBI:29105"/>
        <note>catalytic</note>
    </ligand>
</feature>
<feature type="binding site" evidence="5 6">
    <location>
        <position position="688"/>
    </location>
    <ligand>
        <name>Zn(2+)</name>
        <dbReference type="ChEBI" id="CHEBI:29105"/>
        <note>catalytic</note>
    </ligand>
</feature>
<feature type="binding site" evidence="5">
    <location>
        <position position="746"/>
    </location>
    <ligand>
        <name>Zn(2+)</name>
        <dbReference type="ChEBI" id="CHEBI:29105"/>
        <note>catalytic</note>
    </ligand>
</feature>
<feature type="glycosylation site" description="N-linked (GlcNAc...) asparagine" evidence="4">
    <location>
        <position position="309"/>
    </location>
</feature>
<feature type="glycosylation site" description="N-linked (GlcNAc...) asparagine" evidence="4">
    <location>
        <position position="326"/>
    </location>
</feature>
<feature type="glycosylation site" description="N-linked (GlcNAc...) asparagine" evidence="4">
    <location>
        <position position="393"/>
    </location>
</feature>
<feature type="glycosylation site" description="N-linked (GlcNAc...) asparagine" evidence="4">
    <location>
        <position position="589"/>
    </location>
</feature>
<feature type="glycosylation site" description="N-linked (GlcNAc...) asparagine" evidence="4">
    <location>
        <position position="599"/>
    </location>
</feature>
<feature type="glycosylation site" description="N-linked (GlcNAc...) asparagine" evidence="4">
    <location>
        <position position="709"/>
    </location>
</feature>
<feature type="glycosylation site" description="N-linked (GlcNAc...) asparagine" evidence="4">
    <location>
        <position position="778"/>
    </location>
</feature>
<feature type="disulfide bond" evidence="5">
    <location>
        <begin position="173"/>
        <end position="178"/>
    </location>
</feature>
<feature type="disulfide bond" evidence="5">
    <location>
        <begin position="196"/>
        <end position="834"/>
    </location>
</feature>
<feature type="disulfide bond" evidence="5">
    <location>
        <begin position="204"/>
        <end position="794"/>
    </location>
</feature>
<feature type="disulfide bond" evidence="5">
    <location>
        <begin position="260"/>
        <end position="512"/>
    </location>
</feature>
<feature type="disulfide bond" evidence="5">
    <location>
        <begin position="721"/>
        <end position="846"/>
    </location>
</feature>
<protein>
    <recommendedName>
        <fullName evidence="10">Neprilysin-1</fullName>
        <ecNumber evidence="2">3.4.24.11</ecNumber>
    </recommendedName>
</protein>
<dbReference type="EC" id="3.4.24.11" evidence="2"/>
<dbReference type="EMBL" id="AE014298">
    <property type="protein sequence ID" value="AAF46123.2"/>
    <property type="molecule type" value="Genomic_DNA"/>
</dbReference>
<dbReference type="EMBL" id="AE014298">
    <property type="protein sequence ID" value="AAF46124.2"/>
    <property type="molecule type" value="Genomic_DNA"/>
</dbReference>
<dbReference type="EMBL" id="AE014298">
    <property type="protein sequence ID" value="AHN59396.1"/>
    <property type="molecule type" value="Genomic_DNA"/>
</dbReference>
<dbReference type="EMBL" id="AE014298">
    <property type="protein sequence ID" value="AHN59397.1"/>
    <property type="molecule type" value="Genomic_DNA"/>
</dbReference>
<dbReference type="EMBL" id="BT003622">
    <property type="protein sequence ID" value="AAO39625.1"/>
    <property type="molecule type" value="mRNA"/>
</dbReference>
<dbReference type="RefSeq" id="NP_001284925.1">
    <property type="nucleotide sequence ID" value="NM_001297996.1"/>
</dbReference>
<dbReference type="RefSeq" id="NP_001284926.1">
    <property type="nucleotide sequence ID" value="NM_001297997.1"/>
</dbReference>
<dbReference type="RefSeq" id="NP_511056.2">
    <property type="nucleotide sequence ID" value="NM_078501.3"/>
</dbReference>
<dbReference type="RefSeq" id="NP_727065.1">
    <property type="nucleotide sequence ID" value="NM_167059.2"/>
</dbReference>
<dbReference type="SMR" id="Q9W436"/>
<dbReference type="FunCoup" id="Q9W436">
    <property type="interactions" value="185"/>
</dbReference>
<dbReference type="IntAct" id="Q9W436">
    <property type="interactions" value="1"/>
</dbReference>
<dbReference type="STRING" id="7227.FBpp0310420"/>
<dbReference type="MEROPS" id="M13.A15"/>
<dbReference type="GlyCosmos" id="Q9W436">
    <property type="glycosylation" value="7 sites, No reported glycans"/>
</dbReference>
<dbReference type="GlyGen" id="Q9W436">
    <property type="glycosylation" value="7 sites"/>
</dbReference>
<dbReference type="PaxDb" id="7227-FBpp0070837"/>
<dbReference type="DNASU" id="31547"/>
<dbReference type="EnsemblMetazoa" id="FBtr0070872">
    <property type="protein sequence ID" value="FBpp0070837"/>
    <property type="gene ID" value="FBgn0029843"/>
</dbReference>
<dbReference type="EnsemblMetazoa" id="FBtr0070873">
    <property type="protein sequence ID" value="FBpp0070838"/>
    <property type="gene ID" value="FBgn0029843"/>
</dbReference>
<dbReference type="EnsemblMetazoa" id="FBtr0340032">
    <property type="protein sequence ID" value="FBpp0309046"/>
    <property type="gene ID" value="FBgn0029843"/>
</dbReference>
<dbReference type="EnsemblMetazoa" id="FBtr0343930">
    <property type="protein sequence ID" value="FBpp0310420"/>
    <property type="gene ID" value="FBgn0029843"/>
</dbReference>
<dbReference type="GeneID" id="31547"/>
<dbReference type="KEGG" id="dme:Dmel_CG5905"/>
<dbReference type="UCSC" id="CG5905-RA">
    <property type="organism name" value="d. melanogaster"/>
</dbReference>
<dbReference type="AGR" id="FB:FBgn0029843"/>
<dbReference type="CTD" id="31547"/>
<dbReference type="FlyBase" id="FBgn0029843">
    <property type="gene designation" value="Nep1"/>
</dbReference>
<dbReference type="VEuPathDB" id="VectorBase:FBgn0029843"/>
<dbReference type="eggNOG" id="KOG3624">
    <property type="taxonomic scope" value="Eukaryota"/>
</dbReference>
<dbReference type="GeneTree" id="ENSGT00940000164877"/>
<dbReference type="HOGENOM" id="CLU_006187_4_0_1"/>
<dbReference type="InParanoid" id="Q9W436"/>
<dbReference type="OMA" id="RDNQATI"/>
<dbReference type="OrthoDB" id="6475849at2759"/>
<dbReference type="PhylomeDB" id="Q9W436"/>
<dbReference type="Reactome" id="R-DME-2022377">
    <property type="pathway name" value="Metabolism of Angiotensinogen to Angiotensins"/>
</dbReference>
<dbReference type="Reactome" id="R-DME-5578768">
    <property type="pathway name" value="Physiological factors"/>
</dbReference>
<dbReference type="Reactome" id="R-DME-6798695">
    <property type="pathway name" value="Neutrophil degranulation"/>
</dbReference>
<dbReference type="BioGRID-ORCS" id="31547">
    <property type="hits" value="0 hits in 3 CRISPR screens"/>
</dbReference>
<dbReference type="GenomeRNAi" id="31547"/>
<dbReference type="PRO" id="PR:Q9W436"/>
<dbReference type="Proteomes" id="UP000000803">
    <property type="component" value="Chromosome X"/>
</dbReference>
<dbReference type="Bgee" id="FBgn0029843">
    <property type="expression patterns" value="Expressed in adult posterior midgut class I enteroendocrine cell in adult midgut (Drosophila) and 105 other cell types or tissues"/>
</dbReference>
<dbReference type="GO" id="GO:0016020">
    <property type="term" value="C:membrane"/>
    <property type="evidence" value="ECO:0000255"/>
    <property type="project" value="FlyBase"/>
</dbReference>
<dbReference type="GO" id="GO:0005886">
    <property type="term" value="C:plasma membrane"/>
    <property type="evidence" value="ECO:0000318"/>
    <property type="project" value="GO_Central"/>
</dbReference>
<dbReference type="GO" id="GO:0046872">
    <property type="term" value="F:metal ion binding"/>
    <property type="evidence" value="ECO:0007669"/>
    <property type="project" value="UniProtKB-KW"/>
</dbReference>
<dbReference type="GO" id="GO:0004222">
    <property type="term" value="F:metalloendopeptidase activity"/>
    <property type="evidence" value="ECO:0007669"/>
    <property type="project" value="UniProtKB-EC"/>
</dbReference>
<dbReference type="GO" id="GO:0008237">
    <property type="term" value="F:metallopeptidase activity"/>
    <property type="evidence" value="ECO:0000255"/>
    <property type="project" value="FlyBase"/>
</dbReference>
<dbReference type="GO" id="GO:0006508">
    <property type="term" value="P:proteolysis"/>
    <property type="evidence" value="ECO:0000250"/>
    <property type="project" value="FlyBase"/>
</dbReference>
<dbReference type="CDD" id="cd08662">
    <property type="entry name" value="M13"/>
    <property type="match status" value="1"/>
</dbReference>
<dbReference type="Gene3D" id="3.40.390.10">
    <property type="entry name" value="Collagenase (Catalytic Domain)"/>
    <property type="match status" value="1"/>
</dbReference>
<dbReference type="Gene3D" id="1.10.1380.10">
    <property type="entry name" value="Neutral endopeptidase , domain2"/>
    <property type="match status" value="1"/>
</dbReference>
<dbReference type="InterPro" id="IPR024079">
    <property type="entry name" value="MetalloPept_cat_dom_sf"/>
</dbReference>
<dbReference type="InterPro" id="IPR000718">
    <property type="entry name" value="Peptidase_M13"/>
</dbReference>
<dbReference type="InterPro" id="IPR018497">
    <property type="entry name" value="Peptidase_M13_C"/>
</dbReference>
<dbReference type="InterPro" id="IPR042089">
    <property type="entry name" value="Peptidase_M13_dom_2"/>
</dbReference>
<dbReference type="InterPro" id="IPR008753">
    <property type="entry name" value="Peptidase_M13_N"/>
</dbReference>
<dbReference type="PANTHER" id="PTHR11733:SF241">
    <property type="entry name" value="GH26575P-RELATED"/>
    <property type="match status" value="1"/>
</dbReference>
<dbReference type="PANTHER" id="PTHR11733">
    <property type="entry name" value="ZINC METALLOPROTEASE FAMILY M13 NEPRILYSIN-RELATED"/>
    <property type="match status" value="1"/>
</dbReference>
<dbReference type="Pfam" id="PF01431">
    <property type="entry name" value="Peptidase_M13"/>
    <property type="match status" value="1"/>
</dbReference>
<dbReference type="Pfam" id="PF05649">
    <property type="entry name" value="Peptidase_M13_N"/>
    <property type="match status" value="1"/>
</dbReference>
<dbReference type="PRINTS" id="PR00786">
    <property type="entry name" value="NEPRILYSIN"/>
</dbReference>
<dbReference type="SUPFAM" id="SSF55486">
    <property type="entry name" value="Metalloproteases ('zincins'), catalytic domain"/>
    <property type="match status" value="1"/>
</dbReference>
<dbReference type="PROSITE" id="PS51885">
    <property type="entry name" value="NEPRILYSIN"/>
    <property type="match status" value="1"/>
</dbReference>
<dbReference type="PROSITE" id="PS00142">
    <property type="entry name" value="ZINC_PROTEASE"/>
    <property type="match status" value="1"/>
</dbReference>
<reference evidence="14" key="1">
    <citation type="journal article" date="2000" name="Science">
        <title>The genome sequence of Drosophila melanogaster.</title>
        <authorList>
            <person name="Adams M.D."/>
            <person name="Celniker S.E."/>
            <person name="Holt R.A."/>
            <person name="Evans C.A."/>
            <person name="Gocayne J.D."/>
            <person name="Amanatides P.G."/>
            <person name="Scherer S.E."/>
            <person name="Li P.W."/>
            <person name="Hoskins R.A."/>
            <person name="Galle R.F."/>
            <person name="George R.A."/>
            <person name="Lewis S.E."/>
            <person name="Richards S."/>
            <person name="Ashburner M."/>
            <person name="Henderson S.N."/>
            <person name="Sutton G.G."/>
            <person name="Wortman J.R."/>
            <person name="Yandell M.D."/>
            <person name="Zhang Q."/>
            <person name="Chen L.X."/>
            <person name="Brandon R.C."/>
            <person name="Rogers Y.-H.C."/>
            <person name="Blazej R.G."/>
            <person name="Champe M."/>
            <person name="Pfeiffer B.D."/>
            <person name="Wan K.H."/>
            <person name="Doyle C."/>
            <person name="Baxter E.G."/>
            <person name="Helt G."/>
            <person name="Nelson C.R."/>
            <person name="Miklos G.L.G."/>
            <person name="Abril J.F."/>
            <person name="Agbayani A."/>
            <person name="An H.-J."/>
            <person name="Andrews-Pfannkoch C."/>
            <person name="Baldwin D."/>
            <person name="Ballew R.M."/>
            <person name="Basu A."/>
            <person name="Baxendale J."/>
            <person name="Bayraktaroglu L."/>
            <person name="Beasley E.M."/>
            <person name="Beeson K.Y."/>
            <person name="Benos P.V."/>
            <person name="Berman B.P."/>
            <person name="Bhandari D."/>
            <person name="Bolshakov S."/>
            <person name="Borkova D."/>
            <person name="Botchan M.R."/>
            <person name="Bouck J."/>
            <person name="Brokstein P."/>
            <person name="Brottier P."/>
            <person name="Burtis K.C."/>
            <person name="Busam D.A."/>
            <person name="Butler H."/>
            <person name="Cadieu E."/>
            <person name="Center A."/>
            <person name="Chandra I."/>
            <person name="Cherry J.M."/>
            <person name="Cawley S."/>
            <person name="Dahlke C."/>
            <person name="Davenport L.B."/>
            <person name="Davies P."/>
            <person name="de Pablos B."/>
            <person name="Delcher A."/>
            <person name="Deng Z."/>
            <person name="Mays A.D."/>
            <person name="Dew I."/>
            <person name="Dietz S.M."/>
            <person name="Dodson K."/>
            <person name="Doup L.E."/>
            <person name="Downes M."/>
            <person name="Dugan-Rocha S."/>
            <person name="Dunkov B.C."/>
            <person name="Dunn P."/>
            <person name="Durbin K.J."/>
            <person name="Evangelista C.C."/>
            <person name="Ferraz C."/>
            <person name="Ferriera S."/>
            <person name="Fleischmann W."/>
            <person name="Fosler C."/>
            <person name="Gabrielian A.E."/>
            <person name="Garg N.S."/>
            <person name="Gelbart W.M."/>
            <person name="Glasser K."/>
            <person name="Glodek A."/>
            <person name="Gong F."/>
            <person name="Gorrell J.H."/>
            <person name="Gu Z."/>
            <person name="Guan P."/>
            <person name="Harris M."/>
            <person name="Harris N.L."/>
            <person name="Harvey D.A."/>
            <person name="Heiman T.J."/>
            <person name="Hernandez J.R."/>
            <person name="Houck J."/>
            <person name="Hostin D."/>
            <person name="Houston K.A."/>
            <person name="Howland T.J."/>
            <person name="Wei M.-H."/>
            <person name="Ibegwam C."/>
            <person name="Jalali M."/>
            <person name="Kalush F."/>
            <person name="Karpen G.H."/>
            <person name="Ke Z."/>
            <person name="Kennison J.A."/>
            <person name="Ketchum K.A."/>
            <person name="Kimmel B.E."/>
            <person name="Kodira C.D."/>
            <person name="Kraft C.L."/>
            <person name="Kravitz S."/>
            <person name="Kulp D."/>
            <person name="Lai Z."/>
            <person name="Lasko P."/>
            <person name="Lei Y."/>
            <person name="Levitsky A.A."/>
            <person name="Li J.H."/>
            <person name="Li Z."/>
            <person name="Liang Y."/>
            <person name="Lin X."/>
            <person name="Liu X."/>
            <person name="Mattei B."/>
            <person name="McIntosh T.C."/>
            <person name="McLeod M.P."/>
            <person name="McPherson D."/>
            <person name="Merkulov G."/>
            <person name="Milshina N.V."/>
            <person name="Mobarry C."/>
            <person name="Morris J."/>
            <person name="Moshrefi A."/>
            <person name="Mount S.M."/>
            <person name="Moy M."/>
            <person name="Murphy B."/>
            <person name="Murphy L."/>
            <person name="Muzny D.M."/>
            <person name="Nelson D.L."/>
            <person name="Nelson D.R."/>
            <person name="Nelson K.A."/>
            <person name="Nixon K."/>
            <person name="Nusskern D.R."/>
            <person name="Pacleb J.M."/>
            <person name="Palazzolo M."/>
            <person name="Pittman G.S."/>
            <person name="Pan S."/>
            <person name="Pollard J."/>
            <person name="Puri V."/>
            <person name="Reese M.G."/>
            <person name="Reinert K."/>
            <person name="Remington K."/>
            <person name="Saunders R.D.C."/>
            <person name="Scheeler F."/>
            <person name="Shen H."/>
            <person name="Shue B.C."/>
            <person name="Siden-Kiamos I."/>
            <person name="Simpson M."/>
            <person name="Skupski M.P."/>
            <person name="Smith T.J."/>
            <person name="Spier E."/>
            <person name="Spradling A.C."/>
            <person name="Stapleton M."/>
            <person name="Strong R."/>
            <person name="Sun E."/>
            <person name="Svirskas R."/>
            <person name="Tector C."/>
            <person name="Turner R."/>
            <person name="Venter E."/>
            <person name="Wang A.H."/>
            <person name="Wang X."/>
            <person name="Wang Z.-Y."/>
            <person name="Wassarman D.A."/>
            <person name="Weinstock G.M."/>
            <person name="Weissenbach J."/>
            <person name="Williams S.M."/>
            <person name="Woodage T."/>
            <person name="Worley K.C."/>
            <person name="Wu D."/>
            <person name="Yang S."/>
            <person name="Yao Q.A."/>
            <person name="Ye J."/>
            <person name="Yeh R.-F."/>
            <person name="Zaveri J.S."/>
            <person name="Zhan M."/>
            <person name="Zhang G."/>
            <person name="Zhao Q."/>
            <person name="Zheng L."/>
            <person name="Zheng X.H."/>
            <person name="Zhong F.N."/>
            <person name="Zhong W."/>
            <person name="Zhou X."/>
            <person name="Zhu S.C."/>
            <person name="Zhu X."/>
            <person name="Smith H.O."/>
            <person name="Gibbs R.A."/>
            <person name="Myers E.W."/>
            <person name="Rubin G.M."/>
            <person name="Venter J.C."/>
        </authorList>
    </citation>
    <scope>NUCLEOTIDE SEQUENCE [LARGE SCALE GENOMIC DNA]</scope>
    <source>
        <strain evidence="14">Berkeley</strain>
    </source>
</reference>
<reference evidence="14" key="2">
    <citation type="journal article" date="2002" name="Genome Biol.">
        <title>Annotation of the Drosophila melanogaster euchromatic genome: a systematic review.</title>
        <authorList>
            <person name="Misra S."/>
            <person name="Crosby M.A."/>
            <person name="Mungall C.J."/>
            <person name="Matthews B.B."/>
            <person name="Campbell K.S."/>
            <person name="Hradecky P."/>
            <person name="Huang Y."/>
            <person name="Kaminker J.S."/>
            <person name="Millburn G.H."/>
            <person name="Prochnik S.E."/>
            <person name="Smith C.D."/>
            <person name="Tupy J.L."/>
            <person name="Whitfield E.J."/>
            <person name="Bayraktaroglu L."/>
            <person name="Berman B.P."/>
            <person name="Bettencourt B.R."/>
            <person name="Celniker S.E."/>
            <person name="de Grey A.D.N.J."/>
            <person name="Drysdale R.A."/>
            <person name="Harris N.L."/>
            <person name="Richter J."/>
            <person name="Russo S."/>
            <person name="Schroeder A.J."/>
            <person name="Shu S.Q."/>
            <person name="Stapleton M."/>
            <person name="Yamada C."/>
            <person name="Ashburner M."/>
            <person name="Gelbart W.M."/>
            <person name="Rubin G.M."/>
            <person name="Lewis S.E."/>
        </authorList>
    </citation>
    <scope>GENOME REANNOTATION</scope>
    <source>
        <strain evidence="14">Berkeley</strain>
    </source>
</reference>
<reference evidence="12" key="3">
    <citation type="submission" date="2003-02" db="EMBL/GenBank/DDBJ databases">
        <authorList>
            <person name="Stapleton M."/>
            <person name="Brokstein P."/>
            <person name="Hong L."/>
            <person name="Agbayani A."/>
            <person name="Carlson J."/>
            <person name="Champe M."/>
            <person name="Chavez C."/>
            <person name="Dorsett V."/>
            <person name="Dresnek D."/>
            <person name="Farfan D."/>
            <person name="Frise E."/>
            <person name="George R."/>
            <person name="Gonzalez M."/>
            <person name="Guarin H."/>
            <person name="Kronmiller B."/>
            <person name="Li P."/>
            <person name="Liao G."/>
            <person name="Miranda A."/>
            <person name="Mungall C.J."/>
            <person name="Nunoo J."/>
            <person name="Pacleb J."/>
            <person name="Paragas V."/>
            <person name="Park S."/>
            <person name="Patel S."/>
            <person name="Phouanenavong S."/>
            <person name="Wan K."/>
            <person name="Yu C."/>
            <person name="Lewis S.E."/>
            <person name="Rubin G.M."/>
            <person name="Celniker S."/>
        </authorList>
    </citation>
    <scope>NUCLEOTIDE SEQUENCE [LARGE SCALE MRNA]</scope>
    <source>
        <strain evidence="12">Berkeley</strain>
        <tissue evidence="12">Head</tissue>
    </source>
</reference>
<reference evidence="11" key="4">
    <citation type="journal article" date="2014" name="Genetics">
        <title>Neprilysins: an evolutionarily conserved family of metalloproteases that play important roles in reproduction in Drosophila.</title>
        <authorList>
            <person name="Sitnik J.L."/>
            <person name="Francis C."/>
            <person name="Hens K."/>
            <person name="Huybrechts R."/>
            <person name="Wolfner M.F."/>
            <person name="Callaerts P."/>
        </authorList>
    </citation>
    <scope>FUNCTION</scope>
    <scope>TISSUE SPECIFICITY</scope>
    <scope>DISRUPTION PHENOTYPE</scope>
</reference>
<reference evidence="11" key="5">
    <citation type="journal article" date="2016" name="J. Neurosci.">
        <title>Drosophila neprilysins are involved in middle-term and long-term memory.</title>
        <authorList>
            <person name="Turrel O."/>
            <person name="Lampin-Saint-Amaux A."/>
            <person name="Preat T."/>
            <person name="Goguel V."/>
        </authorList>
    </citation>
    <scope>FUNCTION</scope>
    <scope>DISRUPTION PHENOTYPE</scope>
</reference>
<evidence type="ECO:0000250" key="1">
    <source>
        <dbReference type="UniProtKB" id="P08473"/>
    </source>
</evidence>
<evidence type="ECO:0000250" key="2">
    <source>
        <dbReference type="UniProtKB" id="Q8T062"/>
    </source>
</evidence>
<evidence type="ECO:0000255" key="3"/>
<evidence type="ECO:0000255" key="4">
    <source>
        <dbReference type="PROSITE-ProRule" id="PRU00498"/>
    </source>
</evidence>
<evidence type="ECO:0000255" key="5">
    <source>
        <dbReference type="PROSITE-ProRule" id="PRU01233"/>
    </source>
</evidence>
<evidence type="ECO:0000255" key="6">
    <source>
        <dbReference type="PROSITE-ProRule" id="PRU10095"/>
    </source>
</evidence>
<evidence type="ECO:0000256" key="7">
    <source>
        <dbReference type="SAM" id="MobiDB-lite"/>
    </source>
</evidence>
<evidence type="ECO:0000269" key="8">
    <source>
    </source>
</evidence>
<evidence type="ECO:0000269" key="9">
    <source>
    </source>
</evidence>
<evidence type="ECO:0000303" key="10">
    <source>
    </source>
</evidence>
<evidence type="ECO:0000305" key="11"/>
<evidence type="ECO:0000312" key="12">
    <source>
        <dbReference type="EMBL" id="AAO39625.1"/>
    </source>
</evidence>
<evidence type="ECO:0000312" key="13">
    <source>
        <dbReference type="FlyBase" id="FBgn0029843"/>
    </source>
</evidence>
<evidence type="ECO:0000312" key="14">
    <source>
        <dbReference type="Proteomes" id="UP000000803"/>
    </source>
</evidence>
<gene>
    <name evidence="10 13" type="primary">Nep1</name>
    <name evidence="13" type="ORF">CG5905</name>
</gene>
<organism evidence="14">
    <name type="scientific">Drosophila melanogaster</name>
    <name type="common">Fruit fly</name>
    <dbReference type="NCBI Taxonomy" id="7227"/>
    <lineage>
        <taxon>Eukaryota</taxon>
        <taxon>Metazoa</taxon>
        <taxon>Ecdysozoa</taxon>
        <taxon>Arthropoda</taxon>
        <taxon>Hexapoda</taxon>
        <taxon>Insecta</taxon>
        <taxon>Pterygota</taxon>
        <taxon>Neoptera</taxon>
        <taxon>Endopterygota</taxon>
        <taxon>Diptera</taxon>
        <taxon>Brachycera</taxon>
        <taxon>Muscomorpha</taxon>
        <taxon>Ephydroidea</taxon>
        <taxon>Drosophilidae</taxon>
        <taxon>Drosophila</taxon>
        <taxon>Sophophora</taxon>
    </lineage>
</organism>
<proteinExistence type="evidence at transcript level"/>
<accession>Q9W436</accession>
<sequence>MSQQHEATAAAAEKPLNNGYLQANAPLEELSATVVSPLLGQQQVQHQAPHQMQQQQQQQQQNKLPTVVFLAPDGSGGVGIQRGNPAQGNPGMVTGTGSHSDWLLKESQQRRRLLVLAIAFTVLGAAIGALAIYFASVHQRCHLYRLEPDNDDRPNGRWNQDSGSAHEGQDNICMTQECVRTAASLLSAMDLNSDPCEDFFQYACGTWNKMHPIPEDRSSISTFEVLSDQQQVILRAVLEEPIDERDNKATIKAKTFFKSCMDIPQIRKIGTGRLKQVLQSLGGWPVIERNWSPPADLSVERLMGQLRLNYSEPVMIELYVGADDKNSSVNILQMDQLQYALPSRDYYLKESSANDRRAYHRYMTQVALLLGADPATAAAELEKVVLFETQLVNVSLPEADRHDTSLVYRKMLLPELQELVPEVQWQEYLQAALGPGIPLQEDEPLVTYGLHYLTEMGKILAHTDRRVVHNYMLWRLVMSLMSHMIDEYQRERVEFRKILMGIQSERTRWSQCVEWTNKKLGVAVGALFIRDNFNQESKEVALEMIHTIRAAFNELLAENDWMDDETRAVAKEKADSMNERIGYPELLTNATELEQEYVNLTIVPDNFINNVLSILQWESEKMLRLLRQPVDKEKWTTEPAVVNAFYNPNKNDIVFPAGILQPLFYSQHFPKSLNYGGIGVVIGHEITHGFDDKGRQFDKEGNMMQWWNNATIEAFRERTQCVIDQYSRYKINEVDMFMDGRMTQGENIADNGGLKQAFRAYKKWETLHGREQQLPGLNMTHDQLFFLNYAQIWCGSMRPEDALTKIRSAVHSPGFVRVLGPLSNSRDFASAYKCPLGSTMNPAEKCSVW</sequence>